<comment type="function">
    <text evidence="1">Bifunctional enzyme that catalyzes both the deamination of dCTP to dUTP and the hydrolysis of dUTP to dUMP without releasing the toxic dUTP intermediate.</text>
</comment>
<comment type="catalytic activity">
    <reaction evidence="1">
        <text>dCTP + 2 H2O = dUMP + NH4(+) + diphosphate</text>
        <dbReference type="Rhea" id="RHEA:19205"/>
        <dbReference type="ChEBI" id="CHEBI:15377"/>
        <dbReference type="ChEBI" id="CHEBI:28938"/>
        <dbReference type="ChEBI" id="CHEBI:33019"/>
        <dbReference type="ChEBI" id="CHEBI:61481"/>
        <dbReference type="ChEBI" id="CHEBI:246422"/>
        <dbReference type="EC" id="3.5.4.30"/>
    </reaction>
</comment>
<comment type="pathway">
    <text evidence="1">Pyrimidine metabolism; dUMP biosynthesis; dUMP from dCTP: step 1/1.</text>
</comment>
<comment type="subunit">
    <text evidence="1">Homotrimer.</text>
</comment>
<comment type="similarity">
    <text evidence="1">Belongs to the dCTP deaminase family.</text>
</comment>
<name>DCDB_MYCSK</name>
<feature type="chain" id="PRO_1000009761" description="dCTP deaminase, dUMP-forming">
    <location>
        <begin position="1"/>
        <end position="190"/>
    </location>
</feature>
<feature type="region of interest" description="Disordered" evidence="2">
    <location>
        <begin position="162"/>
        <end position="184"/>
    </location>
</feature>
<feature type="compositionally biased region" description="Polar residues" evidence="2">
    <location>
        <begin position="171"/>
        <end position="184"/>
    </location>
</feature>
<feature type="active site" description="Proton donor/acceptor" evidence="1">
    <location>
        <position position="129"/>
    </location>
</feature>
<feature type="binding site" evidence="1">
    <location>
        <begin position="101"/>
        <end position="106"/>
    </location>
    <ligand>
        <name>dCTP</name>
        <dbReference type="ChEBI" id="CHEBI:61481"/>
    </ligand>
</feature>
<feature type="binding site" evidence="1">
    <location>
        <position position="119"/>
    </location>
    <ligand>
        <name>dCTP</name>
        <dbReference type="ChEBI" id="CHEBI:61481"/>
    </ligand>
</feature>
<feature type="binding site" evidence="1">
    <location>
        <begin position="127"/>
        <end position="129"/>
    </location>
    <ligand>
        <name>dCTP</name>
        <dbReference type="ChEBI" id="CHEBI:61481"/>
    </ligand>
</feature>
<feature type="binding site" evidence="1">
    <location>
        <position position="148"/>
    </location>
    <ligand>
        <name>dCTP</name>
        <dbReference type="ChEBI" id="CHEBI:61481"/>
    </ligand>
</feature>
<feature type="binding site" evidence="1">
    <location>
        <position position="162"/>
    </location>
    <ligand>
        <name>dCTP</name>
        <dbReference type="ChEBI" id="CHEBI:61481"/>
    </ligand>
</feature>
<feature type="binding site" evidence="1">
    <location>
        <position position="174"/>
    </location>
    <ligand>
        <name>dCTP</name>
        <dbReference type="ChEBI" id="CHEBI:61481"/>
    </ligand>
</feature>
<feature type="site" description="Important for bifunctional activity" evidence="1">
    <location>
        <begin position="116"/>
        <end position="117"/>
    </location>
</feature>
<dbReference type="EC" id="3.5.4.30" evidence="1"/>
<dbReference type="EMBL" id="CP000518">
    <property type="protein sequence ID" value="ABL89656.1"/>
    <property type="molecule type" value="Genomic_DNA"/>
</dbReference>
<dbReference type="SMR" id="A1U9Z8"/>
<dbReference type="STRING" id="189918.Mkms_0440"/>
<dbReference type="KEGG" id="mkm:Mkms_0440"/>
<dbReference type="HOGENOM" id="CLU_087476_2_1_11"/>
<dbReference type="OrthoDB" id="9780956at2"/>
<dbReference type="UniPathway" id="UPA00610">
    <property type="reaction ID" value="UER00667"/>
</dbReference>
<dbReference type="GO" id="GO:0033973">
    <property type="term" value="F:dCTP deaminase (dUMP-forming) activity"/>
    <property type="evidence" value="ECO:0007669"/>
    <property type="project" value="UniProtKB-UniRule"/>
</dbReference>
<dbReference type="GO" id="GO:0008829">
    <property type="term" value="F:dCTP deaminase activity"/>
    <property type="evidence" value="ECO:0007669"/>
    <property type="project" value="InterPro"/>
</dbReference>
<dbReference type="GO" id="GO:0000166">
    <property type="term" value="F:nucleotide binding"/>
    <property type="evidence" value="ECO:0007669"/>
    <property type="project" value="UniProtKB-KW"/>
</dbReference>
<dbReference type="GO" id="GO:0006226">
    <property type="term" value="P:dUMP biosynthetic process"/>
    <property type="evidence" value="ECO:0007669"/>
    <property type="project" value="UniProtKB-UniRule"/>
</dbReference>
<dbReference type="GO" id="GO:0006229">
    <property type="term" value="P:dUTP biosynthetic process"/>
    <property type="evidence" value="ECO:0007669"/>
    <property type="project" value="InterPro"/>
</dbReference>
<dbReference type="GO" id="GO:0015949">
    <property type="term" value="P:nucleobase-containing small molecule interconversion"/>
    <property type="evidence" value="ECO:0007669"/>
    <property type="project" value="TreeGrafter"/>
</dbReference>
<dbReference type="CDD" id="cd07557">
    <property type="entry name" value="trimeric_dUTPase"/>
    <property type="match status" value="1"/>
</dbReference>
<dbReference type="FunFam" id="2.70.40.10:FF:000005">
    <property type="entry name" value="dCTP deaminase, dUMP-forming"/>
    <property type="match status" value="1"/>
</dbReference>
<dbReference type="Gene3D" id="2.70.40.10">
    <property type="match status" value="1"/>
</dbReference>
<dbReference type="HAMAP" id="MF_00146">
    <property type="entry name" value="dCTP_deaminase"/>
    <property type="match status" value="1"/>
</dbReference>
<dbReference type="InterPro" id="IPR011962">
    <property type="entry name" value="dCTP_deaminase"/>
</dbReference>
<dbReference type="InterPro" id="IPR036157">
    <property type="entry name" value="dUTPase-like_sf"/>
</dbReference>
<dbReference type="InterPro" id="IPR033704">
    <property type="entry name" value="dUTPase_trimeric"/>
</dbReference>
<dbReference type="NCBIfam" id="TIGR02274">
    <property type="entry name" value="dCTP_deam"/>
    <property type="match status" value="1"/>
</dbReference>
<dbReference type="PANTHER" id="PTHR42680">
    <property type="entry name" value="DCTP DEAMINASE"/>
    <property type="match status" value="1"/>
</dbReference>
<dbReference type="PANTHER" id="PTHR42680:SF3">
    <property type="entry name" value="DCTP DEAMINASE"/>
    <property type="match status" value="1"/>
</dbReference>
<dbReference type="Pfam" id="PF22769">
    <property type="entry name" value="DCD"/>
    <property type="match status" value="1"/>
</dbReference>
<dbReference type="SUPFAM" id="SSF51283">
    <property type="entry name" value="dUTPase-like"/>
    <property type="match status" value="1"/>
</dbReference>
<keyword id="KW-0378">Hydrolase</keyword>
<keyword id="KW-0546">Nucleotide metabolism</keyword>
<keyword id="KW-0547">Nucleotide-binding</keyword>
<reference key="1">
    <citation type="submission" date="2006-12" db="EMBL/GenBank/DDBJ databases">
        <title>Complete sequence of chromosome of Mycobacterium sp. KMS.</title>
        <authorList>
            <consortium name="US DOE Joint Genome Institute"/>
            <person name="Copeland A."/>
            <person name="Lucas S."/>
            <person name="Lapidus A."/>
            <person name="Barry K."/>
            <person name="Detter J.C."/>
            <person name="Glavina del Rio T."/>
            <person name="Hammon N."/>
            <person name="Israni S."/>
            <person name="Dalin E."/>
            <person name="Tice H."/>
            <person name="Pitluck S."/>
            <person name="Kiss H."/>
            <person name="Brettin T."/>
            <person name="Bruce D."/>
            <person name="Han C."/>
            <person name="Tapia R."/>
            <person name="Gilna P."/>
            <person name="Schmutz J."/>
            <person name="Larimer F."/>
            <person name="Land M."/>
            <person name="Hauser L."/>
            <person name="Kyrpides N."/>
            <person name="Mikhailova N."/>
            <person name="Miller C.D."/>
            <person name="Richardson P."/>
        </authorList>
    </citation>
    <scope>NUCLEOTIDE SEQUENCE [LARGE SCALE GENOMIC DNA]</scope>
    <source>
        <strain>KMS</strain>
    </source>
</reference>
<sequence length="190" mass="20715">MLLSDRDIRAEIDAGRLGIDPFEDSLVQPSSVDVRLDTLFRVFNNTRYTHIDPAKQQDELTSLVEPSPGEPFVLHPGEFVLGSTLETCTLPDDLAGRLEGKSSLGRLGLLTHSTAGFIDPGFSGHITLELSNVANLPITLWPGMKIGQLCLLRLTSPAEHPYGSAKVGSKYQGQRGPTPSRSYQNFIKLS</sequence>
<proteinExistence type="inferred from homology"/>
<gene>
    <name evidence="1" type="primary">dcd</name>
    <name type="ordered locus">Mkms_0440</name>
</gene>
<accession>A1U9Z8</accession>
<evidence type="ECO:0000255" key="1">
    <source>
        <dbReference type="HAMAP-Rule" id="MF_00146"/>
    </source>
</evidence>
<evidence type="ECO:0000256" key="2">
    <source>
        <dbReference type="SAM" id="MobiDB-lite"/>
    </source>
</evidence>
<protein>
    <recommendedName>
        <fullName evidence="1">dCTP deaminase, dUMP-forming</fullName>
        <ecNumber evidence="1">3.5.4.30</ecNumber>
    </recommendedName>
    <alternativeName>
        <fullName evidence="1">Bifunctional dCTP deaminase:dUTPase</fullName>
    </alternativeName>
    <alternativeName>
        <fullName evidence="1">DCD-DUT</fullName>
    </alternativeName>
</protein>
<organism>
    <name type="scientific">Mycobacterium sp. (strain KMS)</name>
    <dbReference type="NCBI Taxonomy" id="189918"/>
    <lineage>
        <taxon>Bacteria</taxon>
        <taxon>Bacillati</taxon>
        <taxon>Actinomycetota</taxon>
        <taxon>Actinomycetes</taxon>
        <taxon>Mycobacteriales</taxon>
        <taxon>Mycobacteriaceae</taxon>
        <taxon>Mycobacterium</taxon>
    </lineage>
</organism>